<name>CRTP_STAAW</name>
<protein>
    <recommendedName>
        <fullName evidence="2">4,4'-diaponeurosporene oxygenase</fullName>
        <ecNumber evidence="2">1.14.99.-</ecNumber>
    </recommendedName>
    <alternativeName>
        <fullName evidence="2">4,4'-diaponeurosporene oxidase</fullName>
    </alternativeName>
    <alternativeName>
        <fullName evidence="2">Carotenoid oxidase</fullName>
    </alternativeName>
</protein>
<proteinExistence type="inferred from homology"/>
<organism>
    <name type="scientific">Staphylococcus aureus (strain MW2)</name>
    <dbReference type="NCBI Taxonomy" id="196620"/>
    <lineage>
        <taxon>Bacteria</taxon>
        <taxon>Bacillati</taxon>
        <taxon>Bacillota</taxon>
        <taxon>Bacilli</taxon>
        <taxon>Bacillales</taxon>
        <taxon>Staphylococcaceae</taxon>
        <taxon>Staphylococcus</taxon>
    </lineage>
</organism>
<reference key="1">
    <citation type="journal article" date="2002" name="Lancet">
        <title>Genome and virulence determinants of high virulence community-acquired MRSA.</title>
        <authorList>
            <person name="Baba T."/>
            <person name="Takeuchi F."/>
            <person name="Kuroda M."/>
            <person name="Yuzawa H."/>
            <person name="Aoki K."/>
            <person name="Oguchi A."/>
            <person name="Nagai Y."/>
            <person name="Iwama N."/>
            <person name="Asano K."/>
            <person name="Naimi T."/>
            <person name="Kuroda H."/>
            <person name="Cui L."/>
            <person name="Yamamoto K."/>
            <person name="Hiramatsu K."/>
        </authorList>
    </citation>
    <scope>NUCLEOTIDE SEQUENCE [LARGE SCALE GENOMIC DNA]</scope>
    <source>
        <strain>MW2</strain>
    </source>
</reference>
<dbReference type="EC" id="1.14.99.-" evidence="2"/>
<dbReference type="EMBL" id="BA000033">
    <property type="protein sequence ID" value="BAB96350.1"/>
    <property type="molecule type" value="Genomic_DNA"/>
</dbReference>
<dbReference type="RefSeq" id="WP_000160454.1">
    <property type="nucleotide sequence ID" value="NC_003923.1"/>
</dbReference>
<dbReference type="SMR" id="Q8NUQ3"/>
<dbReference type="KEGG" id="sam:MW2485"/>
<dbReference type="HOGENOM" id="CLU_019722_2_1_9"/>
<dbReference type="UniPathway" id="UPA00029">
    <property type="reaction ID" value="UER00558"/>
</dbReference>
<dbReference type="GO" id="GO:0016491">
    <property type="term" value="F:oxidoreductase activity"/>
    <property type="evidence" value="ECO:0007669"/>
    <property type="project" value="UniProtKB-KW"/>
</dbReference>
<dbReference type="GO" id="GO:0016117">
    <property type="term" value="P:carotenoid biosynthetic process"/>
    <property type="evidence" value="ECO:0007669"/>
    <property type="project" value="UniProtKB-KW"/>
</dbReference>
<dbReference type="Gene3D" id="3.50.50.60">
    <property type="entry name" value="FAD/NAD(P)-binding domain"/>
    <property type="match status" value="2"/>
</dbReference>
<dbReference type="InterPro" id="IPR002937">
    <property type="entry name" value="Amino_oxidase"/>
</dbReference>
<dbReference type="InterPro" id="IPR014105">
    <property type="entry name" value="Carotenoid/retinoid_OxRdtase"/>
</dbReference>
<dbReference type="InterPro" id="IPR036188">
    <property type="entry name" value="FAD/NAD-bd_sf"/>
</dbReference>
<dbReference type="NCBIfam" id="TIGR02734">
    <property type="entry name" value="crtI_fam"/>
    <property type="match status" value="1"/>
</dbReference>
<dbReference type="PANTHER" id="PTHR43734:SF7">
    <property type="entry name" value="4,4'-DIAPONEUROSPORENE OXYGENASE"/>
    <property type="match status" value="1"/>
</dbReference>
<dbReference type="PANTHER" id="PTHR43734">
    <property type="entry name" value="PHYTOENE DESATURASE"/>
    <property type="match status" value="1"/>
</dbReference>
<dbReference type="Pfam" id="PF01593">
    <property type="entry name" value="Amino_oxidase"/>
    <property type="match status" value="1"/>
</dbReference>
<dbReference type="SUPFAM" id="SSF51905">
    <property type="entry name" value="FAD/NAD(P)-binding domain"/>
    <property type="match status" value="1"/>
</dbReference>
<accession>Q8NUQ3</accession>
<keyword id="KW-0125">Carotenoid biosynthesis</keyword>
<keyword id="KW-0274">FAD</keyword>
<keyword id="KW-0285">Flavoprotein</keyword>
<keyword id="KW-0560">Oxidoreductase</keyword>
<keyword id="KW-0843">Virulence</keyword>
<evidence type="ECO:0000250" key="1">
    <source>
        <dbReference type="UniProtKB" id="P21685"/>
    </source>
</evidence>
<evidence type="ECO:0000250" key="2">
    <source>
        <dbReference type="UniProtKB" id="Q2FV57"/>
    </source>
</evidence>
<evidence type="ECO:0000255" key="3"/>
<comment type="function">
    <text evidence="2">Involved in the biosynthesis of the yellow-orange carotenoid staphyloxanthin, which plays a role in the virulence via its protective function against oxidative stress. Catalyzes the oxidation of the terminal methyl side group of 4,4'-diaponeurosporene to form 4,4'-diaponeurosporen-4-al.</text>
</comment>
<comment type="catalytic activity">
    <reaction evidence="2">
        <text>all-trans-4,4'-diaponeurosporene + 2 AH2 + 2 O2 = 4,4'-diaponeurosporenal + 2 A + 3 H2O</text>
        <dbReference type="Rhea" id="RHEA:56104"/>
        <dbReference type="ChEBI" id="CHEBI:13193"/>
        <dbReference type="ChEBI" id="CHEBI:15377"/>
        <dbReference type="ChEBI" id="CHEBI:15379"/>
        <dbReference type="ChEBI" id="CHEBI:17499"/>
        <dbReference type="ChEBI" id="CHEBI:62743"/>
        <dbReference type="ChEBI" id="CHEBI:79065"/>
    </reaction>
</comment>
<comment type="cofactor">
    <cofactor evidence="1">
        <name>FAD</name>
        <dbReference type="ChEBI" id="CHEBI:57692"/>
    </cofactor>
</comment>
<comment type="pathway">
    <text evidence="2">Carotenoid biosynthesis; staphyloxanthin biosynthesis; staphyloxanthin from farnesyl diphosphate: step 3/5.</text>
</comment>
<comment type="similarity">
    <text evidence="2">Belongs to the carotenoid/retinoid oxidoreductase family. CrtP subfamily.</text>
</comment>
<gene>
    <name evidence="2" type="primary">crtP</name>
    <name type="ordered locus">MW2485</name>
</gene>
<sequence length="497" mass="57217">MTKHIIVIGGGLGGISAAIRMAQSGYSVSLYEQNNHIGGKVNRHESDGFGFDLGPSILTMPYIFEKLFEYSKKQMSDYVTIKRLPHQWRSFFPDGTTIDLYEGIKETGQHNAILSKQDIEELQNYLNYTRRIDRITEKGYFNYGLDTLSQIIKFHGPLNALINYDYVHTMQQAIDKRISNPYLRQMLGYFIKYVGSSSYDAPAVLSMLFHMQQEQGLWYVEGGIHHLANALEKLAREEGVTIHTGARVDNIKTYQRRVTGVRLDTGEFVKADYIISNMEVIPTYKYLIHLDTQRLNKLEREFEPASSGYVMHLGVACQYPQLAHHNFFFTENAYLNYQQVFHEKVLPDDPTIYLVNTNKTDHTQAPVGYENIKVLPHIPYIQDQPFTTEDYAKFRDKILDKLEKMGLTDLRKHIIYEDVWTPEDIEKNYRSNRGAIYGFVADKKKNKGFKFPKESQYFENLYFVGGSVNPGGGIPMVTLSGQQVADKINAREAKNRK</sequence>
<feature type="chain" id="PRO_0000285229" description="4,4'-diaponeurosporene oxygenase">
    <location>
        <begin position="1"/>
        <end position="497"/>
    </location>
</feature>
<feature type="binding site" evidence="3">
    <location>
        <begin position="7"/>
        <end position="19"/>
    </location>
    <ligand>
        <name>FAD</name>
        <dbReference type="ChEBI" id="CHEBI:57692"/>
    </ligand>
</feature>